<organism>
    <name type="scientific">Homo sapiens</name>
    <name type="common">Human</name>
    <dbReference type="NCBI Taxonomy" id="9606"/>
    <lineage>
        <taxon>Eukaryota</taxon>
        <taxon>Metazoa</taxon>
        <taxon>Chordata</taxon>
        <taxon>Craniata</taxon>
        <taxon>Vertebrata</taxon>
        <taxon>Euteleostomi</taxon>
        <taxon>Mammalia</taxon>
        <taxon>Eutheria</taxon>
        <taxon>Euarchontoglires</taxon>
        <taxon>Primates</taxon>
        <taxon>Haplorrhini</taxon>
        <taxon>Catarrhini</taxon>
        <taxon>Hominidae</taxon>
        <taxon>Homo</taxon>
    </lineage>
</organism>
<keyword id="KW-0002">3D-structure</keyword>
<keyword id="KW-0156">Chromatin regulator</keyword>
<keyword id="KW-0963">Cytoplasm</keyword>
<keyword id="KW-0217">Developmental protein</keyword>
<keyword id="KW-0539">Nucleus</keyword>
<keyword id="KW-1267">Proteomics identification</keyword>
<keyword id="KW-1185">Reference proteome</keyword>
<name>DPPA3_HUMAN</name>
<proteinExistence type="evidence at protein level"/>
<comment type="function">
    <text evidence="1 7">Primordial germ cell (PGCs)-specific protein involved in epigenetic chromatin reprogramming in the zygote following fertilization (PubMed:35314832). In zygotes, DNA demethylation occurs selectively in the paternal pronucleus before the first cell division, while the adjacent maternal pronucleus and certain paternally-imprinted loci are protected from this process (By similarity). Participates in protection of DNA methylation in the maternal pronucleus by preventing conversion of 5mC to 5hmC: specifically recognizes and binds histone H3 dimethylated at 'Lys-9' (H3K9me2) on maternal genome, and protects maternal genome from TET3-mediated conversion to 5hmC and subsequent DNA demethylation (By similarity). Does not bind paternal chromatin, which is mainly packed into protamine and does not contain much H3K9me2 mark (By similarity). Also protects imprinted loci that are marked with H3K9me2 in mature sperm from DNA demethylation in early embryogenesis (By similarity). May be important for the totipotent/pluripotent states continuing through preimplantation development (By similarity). Also involved in chromatin condensation in oocytogenesis (By similarity).</text>
</comment>
<comment type="interaction">
    <interactant intactId="EBI-12082590">
        <id>Q6W0C5</id>
    </interactant>
    <interactant intactId="EBI-12366971">
        <id>O75140-2</id>
        <label>DEPDC5</label>
    </interactant>
    <organismsDiffer>false</organismsDiffer>
    <experiments>3</experiments>
</comment>
<comment type="interaction">
    <interactant intactId="EBI-12082590">
        <id>Q6W0C5</id>
    </interactant>
    <interactant intactId="EBI-349105">
        <id>P63167</id>
        <label>DYNLL1</label>
    </interactant>
    <organismsDiffer>false</organismsDiffer>
    <experiments>5</experiments>
</comment>
<comment type="interaction">
    <interactant intactId="EBI-12082590">
        <id>Q6W0C5</id>
    </interactant>
    <interactant intactId="EBI-742371">
        <id>Q96FJ2</id>
        <label>DYNLL2</label>
    </interactant>
    <organismsDiffer>false</organismsDiffer>
    <experiments>3</experiments>
</comment>
<comment type="interaction">
    <interactant intactId="EBI-12082590">
        <id>Q6W0C5</id>
    </interactant>
    <interactant intactId="EBI-395719">
        <id>Q99871</id>
        <label>HAUS7</label>
    </interactant>
    <organismsDiffer>false</organismsDiffer>
    <experiments>3</experiments>
</comment>
<comment type="interaction">
    <interactant intactId="EBI-12082590">
        <id>Q6W0C5</id>
    </interactant>
    <interactant intactId="EBI-3044087">
        <id>Q7Z3Y8</id>
        <label>KRT27</label>
    </interactant>
    <organismsDiffer>false</organismsDiffer>
    <experiments>3</experiments>
</comment>
<comment type="interaction">
    <interactant intactId="EBI-12082590">
        <id>Q6W0C5</id>
    </interactant>
    <interactant intactId="EBI-2952745">
        <id>Q01546</id>
        <label>KRT76</label>
    </interactant>
    <organismsDiffer>false</organismsDiffer>
    <experiments>3</experiments>
</comment>
<comment type="interaction">
    <interactant intactId="EBI-12082590">
        <id>Q6W0C5</id>
    </interactant>
    <interactant intactId="EBI-347978">
        <id>P37198</id>
        <label>NUP62</label>
    </interactant>
    <organismsDiffer>false</organismsDiffer>
    <experiments>3</experiments>
</comment>
<comment type="interaction">
    <interactant intactId="EBI-12082590">
        <id>Q6W0C5</id>
    </interactant>
    <interactant intactId="EBI-949255">
        <id>Q58EX7</id>
        <label>PLEKHG4</label>
    </interactant>
    <organismsDiffer>false</organismsDiffer>
    <experiments>3</experiments>
</comment>
<comment type="interaction">
    <interactant intactId="EBI-12082590">
        <id>Q6W0C5</id>
    </interactant>
    <interactant intactId="EBI-748621">
        <id>Q9UJW9</id>
        <label>SERTAD3</label>
    </interactant>
    <organismsDiffer>false</organismsDiffer>
    <experiments>3</experiments>
</comment>
<comment type="interaction">
    <interactant intactId="EBI-12082590">
        <id>Q6W0C5</id>
    </interactant>
    <interactant intactId="EBI-1105213">
        <id>Q9UBB9</id>
        <label>TFIP11</label>
    </interactant>
    <organismsDiffer>false</organismsDiffer>
    <experiments>3</experiments>
</comment>
<comment type="interaction">
    <interactant intactId="EBI-12082590">
        <id>Q6W0C5</id>
    </interactant>
    <interactant intactId="EBI-492476">
        <id>Q96RU7</id>
        <label>TRIB3</label>
    </interactant>
    <organismsDiffer>false</organismsDiffer>
    <experiments>3</experiments>
</comment>
<comment type="interaction">
    <interactant intactId="EBI-12082590">
        <id>Q6W0C5</id>
    </interactant>
    <interactant intactId="EBI-6255994">
        <id>Q5T7W0</id>
        <label>ZNF618</label>
    </interactant>
    <organismsDiffer>false</organismsDiffer>
    <experiments>3</experiments>
</comment>
<comment type="subcellular location">
    <subcellularLocation>
        <location evidence="6">Nucleus</location>
    </subcellularLocation>
    <subcellularLocation>
        <location evidence="6">Cytoplasm</location>
    </subcellularLocation>
    <text evidence="1">Mainly localizes in the female pronucleus, localization to the male pronucleus in much weaker.</text>
</comment>
<comment type="tissue specificity">
    <text evidence="3 4 5">Low expression in testis, ovary and thymus. Expressed in embryonic stem and carcinoma cells. Highly expressed in testicular germ cell tumors.</text>
</comment>
<comment type="developmental stage">
    <text evidence="5">Expressed in fetal ovary.</text>
</comment>
<comment type="domain">
    <text evidence="1">Mediates binding to H3K9me2 via N-terminal region, while ability to exclude TET3 from the maternal pronucleus requires the C-terminal part.</text>
</comment>
<feature type="chain" id="PRO_0000239265" description="Developmental pluripotency-associated protein 3">
    <location>
        <begin position="1"/>
        <end position="159"/>
    </location>
</feature>
<feature type="region of interest" description="Disordered" evidence="2">
    <location>
        <begin position="1"/>
        <end position="31"/>
    </location>
</feature>
<feature type="region of interest" description="Disordered" evidence="2">
    <location>
        <begin position="140"/>
        <end position="159"/>
    </location>
</feature>
<feature type="compositionally biased region" description="Polar residues" evidence="2">
    <location>
        <begin position="149"/>
        <end position="159"/>
    </location>
</feature>
<feature type="sequence variant" id="VAR_030533" description="In dbSNP:rs2024320.">
    <original>E</original>
    <variation>Q</variation>
    <location>
        <position position="51"/>
    </location>
</feature>
<feature type="sequence conflict" description="In Ref. 2; AAO39708 and 3; AAH62480/AAI25146." evidence="8" ref="2 3">
    <original>S</original>
    <variation>L</variation>
    <location>
        <position position="57"/>
    </location>
</feature>
<feature type="sequence conflict" description="In Ref. 2; AAO39708 and 3; AAH62480/AAI25146." evidence="8" ref="2 3">
    <original>G</original>
    <variation>E</variation>
    <location>
        <position position="150"/>
    </location>
</feature>
<feature type="helix" evidence="9">
    <location>
        <begin position="77"/>
        <end position="80"/>
    </location>
</feature>
<feature type="helix" evidence="9">
    <location>
        <begin position="88"/>
        <end position="103"/>
    </location>
</feature>
<reference key="1">
    <citation type="journal article" date="2003" name="Curr. Biol.">
        <title>Stella is a maternal effect gene required for normal early development in mice.</title>
        <authorList>
            <person name="Payer B."/>
            <person name="Saitou M."/>
            <person name="Barton S.C."/>
            <person name="Thresher R."/>
            <person name="Dixon J.P."/>
            <person name="Zahn D."/>
            <person name="Colledge W.H."/>
            <person name="Carlton M.B."/>
            <person name="Nakano T."/>
            <person name="Surani M.A."/>
        </authorList>
    </citation>
    <scope>NUCLEOTIDE SEQUENCE [MRNA]</scope>
    <scope>TISSUE SPECIFICITY</scope>
</reference>
<reference key="2">
    <citation type="journal article" date="2004" name="Stem Cells">
        <title>Human STELLAR, NANOG, and GDF3 genes are expressed in pluripotent cells and map to chromosome 12p13, a hotspot for teratocarcinoma.</title>
        <authorList>
            <person name="Clark A.T."/>
            <person name="Rodriguez R.T."/>
            <person name="Bodnar M.S."/>
            <person name="Abeyta M.J."/>
            <person name="Cedars M.I."/>
            <person name="Turek P.J."/>
            <person name="Firpo M.T."/>
            <person name="Reijo Pera R.A."/>
        </authorList>
    </citation>
    <scope>NUCLEOTIDE SEQUENCE [MRNA]</scope>
    <scope>DEVELOPMENTAL STAGE</scope>
    <scope>TISSUE SPECIFICITY</scope>
    <source>
        <tissue>Testis</tissue>
    </source>
</reference>
<reference key="3">
    <citation type="journal article" date="2004" name="Genome Res.">
        <title>The status, quality, and expansion of the NIH full-length cDNA project: the Mammalian Gene Collection (MGC).</title>
        <authorList>
            <consortium name="The MGC Project Team"/>
        </authorList>
    </citation>
    <scope>NUCLEOTIDE SEQUENCE [LARGE SCALE MRNA]</scope>
</reference>
<reference key="4">
    <citation type="journal article" date="2011" name="Hum. Mol. Genet.">
        <title>NANOS3 function in human germ cell development.</title>
        <authorList>
            <person name="Julaton V.T."/>
            <person name="Reijo Pera R.A."/>
        </authorList>
    </citation>
    <scope>SUBCELLULAR LOCATION</scope>
</reference>
<reference key="5">
    <citation type="journal article" date="2003" name="Cytogenet. Genome Res.">
        <title>Dppa3 is a marker of pluripotency and has a human homologue that is expressed in germ cell tumours.</title>
        <authorList>
            <person name="Bowles J."/>
            <person name="Teasdale R.P."/>
            <person name="James K."/>
            <person name="Koopman P."/>
        </authorList>
    </citation>
    <scope>TISSUE SPECIFICITY</scope>
</reference>
<reference key="6">
    <citation type="journal article" date="2022" name="Nature">
        <title>Rolling back human pluripotent stem cells to an eight-cell embryo-like stage.</title>
        <authorList>
            <person name="Mazid M.A."/>
            <person name="Ward C."/>
            <person name="Luo Z."/>
            <person name="Liu C."/>
            <person name="Li Y."/>
            <person name="Lai Y."/>
            <person name="Wu L."/>
            <person name="Li J."/>
            <person name="Jia W."/>
            <person name="Jiang Y."/>
            <person name="Liu H."/>
            <person name="Fu L."/>
            <person name="Yang Y."/>
            <person name="Ibanez D.P."/>
            <person name="Lai J."/>
            <person name="Wei X."/>
            <person name="An J."/>
            <person name="Guo P."/>
            <person name="Yuan Y."/>
            <person name="Deng Q."/>
            <person name="Wang Y."/>
            <person name="Liu Y."/>
            <person name="Gao F."/>
            <person name="Wang J."/>
            <person name="Zaman S."/>
            <person name="Qin B."/>
            <person name="Wu G."/>
            <person name="Maxwell P.H."/>
            <person name="Xu X."/>
            <person name="Liu L."/>
            <person name="Li W."/>
            <person name="Esteban M.A."/>
        </authorList>
    </citation>
    <scope>FUNCTION</scope>
</reference>
<protein>
    <recommendedName>
        <fullName>Developmental pluripotency-associated protein 3</fullName>
    </recommendedName>
    <alternativeName>
        <fullName>Stella-related protein</fullName>
    </alternativeName>
</protein>
<evidence type="ECO:0000250" key="1">
    <source>
        <dbReference type="UniProtKB" id="Q8QZY3"/>
    </source>
</evidence>
<evidence type="ECO:0000256" key="2">
    <source>
        <dbReference type="SAM" id="MobiDB-lite"/>
    </source>
</evidence>
<evidence type="ECO:0000269" key="3">
    <source>
    </source>
</evidence>
<evidence type="ECO:0000269" key="4">
    <source>
    </source>
</evidence>
<evidence type="ECO:0000269" key="5">
    <source>
    </source>
</evidence>
<evidence type="ECO:0000269" key="6">
    <source>
    </source>
</evidence>
<evidence type="ECO:0000269" key="7">
    <source>
    </source>
</evidence>
<evidence type="ECO:0000305" key="8"/>
<evidence type="ECO:0007829" key="9">
    <source>
        <dbReference type="PDB" id="8XV8"/>
    </source>
</evidence>
<gene>
    <name type="primary">DPPA3</name>
    <name type="synonym">STELLAR</name>
</gene>
<accession>Q6W0C5</accession>
<accession>Q0P5U3</accession>
<accession>Q6JZS6</accession>
<dbReference type="EMBL" id="AY317075">
    <property type="protein sequence ID" value="AAQ84110.1"/>
    <property type="molecule type" value="mRNA"/>
</dbReference>
<dbReference type="EMBL" id="AY230136">
    <property type="protein sequence ID" value="AAO39708.1"/>
    <property type="molecule type" value="mRNA"/>
</dbReference>
<dbReference type="EMBL" id="BC062480">
    <property type="protein sequence ID" value="AAH62480.1"/>
    <property type="molecule type" value="mRNA"/>
</dbReference>
<dbReference type="EMBL" id="BC125145">
    <property type="protein sequence ID" value="AAI25146.1"/>
    <property type="molecule type" value="mRNA"/>
</dbReference>
<dbReference type="CCDS" id="CCDS8582.1"/>
<dbReference type="RefSeq" id="NP_954980.1">
    <property type="nucleotide sequence ID" value="NM_199286.4"/>
</dbReference>
<dbReference type="PDB" id="8WMS">
    <property type="method" value="X-ray"/>
    <property type="resolution" value="2.40 A"/>
    <property type="chains" value="B=81-118"/>
</dbReference>
<dbReference type="PDB" id="8XV7">
    <property type="method" value="X-ray"/>
    <property type="resolution" value="2.25 A"/>
    <property type="chains" value="B/D/F/H=75-121"/>
</dbReference>
<dbReference type="PDB" id="8XV8">
    <property type="method" value="X-ray"/>
    <property type="resolution" value="2.05 A"/>
    <property type="chains" value="B/D/F/H=75-121"/>
</dbReference>
<dbReference type="PDBsum" id="8WMS"/>
<dbReference type="PDBsum" id="8XV7"/>
<dbReference type="PDBsum" id="8XV8"/>
<dbReference type="SMR" id="Q6W0C5"/>
<dbReference type="BioGRID" id="131762">
    <property type="interactions" value="47"/>
</dbReference>
<dbReference type="FunCoup" id="Q6W0C5">
    <property type="interactions" value="13"/>
</dbReference>
<dbReference type="IntAct" id="Q6W0C5">
    <property type="interactions" value="25"/>
</dbReference>
<dbReference type="MINT" id="Q6W0C5"/>
<dbReference type="STRING" id="9606.ENSP00000339250"/>
<dbReference type="iPTMnet" id="Q6W0C5"/>
<dbReference type="PhosphoSitePlus" id="Q6W0C5"/>
<dbReference type="BioMuta" id="DPPA3"/>
<dbReference type="DMDM" id="74749483"/>
<dbReference type="MassIVE" id="Q6W0C5"/>
<dbReference type="PaxDb" id="9606-ENSP00000339250"/>
<dbReference type="PeptideAtlas" id="Q6W0C5"/>
<dbReference type="Antibodypedia" id="22960">
    <property type="antibodies" value="163 antibodies from 32 providers"/>
</dbReference>
<dbReference type="DNASU" id="359787"/>
<dbReference type="Ensembl" id="ENST00000345088.3">
    <property type="protein sequence ID" value="ENSP00000339250.2"/>
    <property type="gene ID" value="ENSG00000187569.3"/>
</dbReference>
<dbReference type="GeneID" id="359787"/>
<dbReference type="KEGG" id="hsa:359787"/>
<dbReference type="MANE-Select" id="ENST00000345088.3">
    <property type="protein sequence ID" value="ENSP00000339250.2"/>
    <property type="RefSeq nucleotide sequence ID" value="NM_199286.4"/>
    <property type="RefSeq protein sequence ID" value="NP_954980.1"/>
</dbReference>
<dbReference type="UCSC" id="uc001qtf.4">
    <property type="organism name" value="human"/>
</dbReference>
<dbReference type="AGR" id="HGNC:19199"/>
<dbReference type="CTD" id="359787"/>
<dbReference type="DisGeNET" id="359787"/>
<dbReference type="GeneCards" id="DPPA3"/>
<dbReference type="HGNC" id="HGNC:19199">
    <property type="gene designation" value="DPPA3"/>
</dbReference>
<dbReference type="HPA" id="ENSG00000187569">
    <property type="expression patterns" value="Tissue enhanced (fallopian tube, ovary, testis)"/>
</dbReference>
<dbReference type="MIM" id="608408">
    <property type="type" value="gene"/>
</dbReference>
<dbReference type="neXtProt" id="NX_Q6W0C5"/>
<dbReference type="OpenTargets" id="ENSG00000187569"/>
<dbReference type="PharmGKB" id="PA134951641"/>
<dbReference type="VEuPathDB" id="HostDB:ENSG00000187569"/>
<dbReference type="eggNOG" id="ENOG502TDBW">
    <property type="taxonomic scope" value="Eukaryota"/>
</dbReference>
<dbReference type="GeneTree" id="ENSGT00800000124303"/>
<dbReference type="HOGENOM" id="CLU_107188_1_0_1"/>
<dbReference type="InParanoid" id="Q6W0C5"/>
<dbReference type="OMA" id="GNYDSKP"/>
<dbReference type="OrthoDB" id="9529981at2759"/>
<dbReference type="PAN-GO" id="Q6W0C5">
    <property type="GO annotations" value="5 GO annotations based on evolutionary models"/>
</dbReference>
<dbReference type="PhylomeDB" id="Q6W0C5"/>
<dbReference type="TreeFam" id="TF338511"/>
<dbReference type="PathwayCommons" id="Q6W0C5"/>
<dbReference type="Reactome" id="R-HSA-9821002">
    <property type="pathway name" value="Chromatin modifications during the maternal to zygotic transition (MZT)"/>
</dbReference>
<dbReference type="SignaLink" id="Q6W0C5"/>
<dbReference type="BioGRID-ORCS" id="359787">
    <property type="hits" value="110 hits in 1106 CRISPR screens"/>
</dbReference>
<dbReference type="GeneWiki" id="DPPA3"/>
<dbReference type="GenomeRNAi" id="359787"/>
<dbReference type="Pharos" id="Q6W0C5">
    <property type="development level" value="Tbio"/>
</dbReference>
<dbReference type="PRO" id="PR:Q6W0C5"/>
<dbReference type="Proteomes" id="UP000005640">
    <property type="component" value="Chromosome 12"/>
</dbReference>
<dbReference type="RNAct" id="Q6W0C5">
    <property type="molecule type" value="protein"/>
</dbReference>
<dbReference type="Bgee" id="ENSG00000187569">
    <property type="expression patterns" value="Expressed in primordial germ cell in gonad and 15 other cell types or tissues"/>
</dbReference>
<dbReference type="GO" id="GO:0005737">
    <property type="term" value="C:cytoplasm"/>
    <property type="evidence" value="ECO:0000314"/>
    <property type="project" value="UniProtKB"/>
</dbReference>
<dbReference type="GO" id="GO:0001939">
    <property type="term" value="C:female pronucleus"/>
    <property type="evidence" value="ECO:0000250"/>
    <property type="project" value="UniProtKB"/>
</dbReference>
<dbReference type="GO" id="GO:0005634">
    <property type="term" value="C:nucleus"/>
    <property type="evidence" value="ECO:0000314"/>
    <property type="project" value="UniProtKB"/>
</dbReference>
<dbReference type="GO" id="GO:0062072">
    <property type="term" value="F:histone H3K9me2/3 reader activity"/>
    <property type="evidence" value="ECO:0000250"/>
    <property type="project" value="UniProtKB"/>
</dbReference>
<dbReference type="GO" id="GO:0035064">
    <property type="term" value="F:methylated histone binding"/>
    <property type="evidence" value="ECO:0000318"/>
    <property type="project" value="GO_Central"/>
</dbReference>
<dbReference type="GO" id="GO:0044726">
    <property type="term" value="P:epigenetic programing of female pronucleus"/>
    <property type="evidence" value="ECO:0000250"/>
    <property type="project" value="UniProtKB"/>
</dbReference>
<dbReference type="InterPro" id="IPR029096">
    <property type="entry name" value="Dppa3"/>
</dbReference>
<dbReference type="PANTHER" id="PTHR31577:SF2">
    <property type="entry name" value="DEVELOPMENTAL PLURIPOTENCY-ASSOCIATED PROTEIN 3"/>
    <property type="match status" value="1"/>
</dbReference>
<dbReference type="PANTHER" id="PTHR31577">
    <property type="entry name" value="DEVELOPMENTAL PLURIPOTENCY-ASSOCIATED PROTEIN 3-RELATED"/>
    <property type="match status" value="1"/>
</dbReference>
<dbReference type="Pfam" id="PF15549">
    <property type="entry name" value="PGC7_Stella"/>
    <property type="match status" value="1"/>
</dbReference>
<sequence>MDPSQFNPTYIPGSPQMLTEENSRDDSGASQISSETLIKNLSNLTINASSESVSPLSEALLRRESVGAAVLREIEDEWLYSRRGVRTLLSVQREKMARLRYMLLGGVRTHERRPTNKEPKGVKKESRPFKCPCSFCVSNGWDPSENARIGNQDTKPLQP</sequence>